<protein>
    <recommendedName>
        <fullName evidence="1">ATP phosphoribosyltransferase</fullName>
        <shortName evidence="1">ATP-PRT</shortName>
        <shortName evidence="1">ATP-PRTase</shortName>
        <ecNumber evidence="1">2.4.2.17</ecNumber>
    </recommendedName>
</protein>
<gene>
    <name evidence="1" type="primary">hisG</name>
    <name type="ordered locus">BPUM_3127</name>
</gene>
<sequence>MGKVLTMAMPKGRIFEEAAGLLRQAGYQLPEEFEDSRKLIIDVPEESLRFILAKPMDVTTYVEHGVADVGIAGKDVMLEEARDVYEVLDLNISKCHLAVAGLPGASWGGVAPRVATKYPNVASSYFREQGEQVEIIKLNGSIELAPLIGLADRIVDIVSTGQTLKENGLVETEHICDITSRFIVNPVSYRMKDAVIDEMAQRLARIIEGEETS</sequence>
<evidence type="ECO:0000255" key="1">
    <source>
        <dbReference type="HAMAP-Rule" id="MF_01018"/>
    </source>
</evidence>
<feature type="chain" id="PRO_1000063264" description="ATP phosphoribosyltransferase">
    <location>
        <begin position="1"/>
        <end position="213"/>
    </location>
</feature>
<reference key="1">
    <citation type="journal article" date="2007" name="PLoS ONE">
        <title>Paradoxical DNA repair and peroxide resistance gene conservation in Bacillus pumilus SAFR-032.</title>
        <authorList>
            <person name="Gioia J."/>
            <person name="Yerrapragada S."/>
            <person name="Qin X."/>
            <person name="Jiang H."/>
            <person name="Igboeli O.C."/>
            <person name="Muzny D."/>
            <person name="Dugan-Rocha S."/>
            <person name="Ding Y."/>
            <person name="Hawes A."/>
            <person name="Liu W."/>
            <person name="Perez L."/>
            <person name="Kovar C."/>
            <person name="Dinh H."/>
            <person name="Lee S."/>
            <person name="Nazareth L."/>
            <person name="Blyth P."/>
            <person name="Holder M."/>
            <person name="Buhay C."/>
            <person name="Tirumalai M.R."/>
            <person name="Liu Y."/>
            <person name="Dasgupta I."/>
            <person name="Bokhetache L."/>
            <person name="Fujita M."/>
            <person name="Karouia F."/>
            <person name="Eswara Moorthy P."/>
            <person name="Siefert J."/>
            <person name="Uzman A."/>
            <person name="Buzumbo P."/>
            <person name="Verma A."/>
            <person name="Zwiya H."/>
            <person name="McWilliams B.D."/>
            <person name="Olowu A."/>
            <person name="Clinkenbeard K.D."/>
            <person name="Newcombe D."/>
            <person name="Golebiewski L."/>
            <person name="Petrosino J.F."/>
            <person name="Nicholson W.L."/>
            <person name="Fox G.E."/>
            <person name="Venkateswaran K."/>
            <person name="Highlander S.K."/>
            <person name="Weinstock G.M."/>
        </authorList>
    </citation>
    <scope>NUCLEOTIDE SEQUENCE [LARGE SCALE GENOMIC DNA]</scope>
    <source>
        <strain>SAFR-032</strain>
    </source>
</reference>
<accession>A8FHR4</accession>
<dbReference type="EC" id="2.4.2.17" evidence="1"/>
<dbReference type="EMBL" id="CP000813">
    <property type="protein sequence ID" value="ABV63781.1"/>
    <property type="molecule type" value="Genomic_DNA"/>
</dbReference>
<dbReference type="RefSeq" id="WP_012011370.1">
    <property type="nucleotide sequence ID" value="NC_009848.4"/>
</dbReference>
<dbReference type="SMR" id="A8FHR4"/>
<dbReference type="STRING" id="315750.BPUM_3127"/>
<dbReference type="GeneID" id="5622418"/>
<dbReference type="KEGG" id="bpu:BPUM_3127"/>
<dbReference type="eggNOG" id="COG0040">
    <property type="taxonomic scope" value="Bacteria"/>
</dbReference>
<dbReference type="HOGENOM" id="CLU_038115_2_0_9"/>
<dbReference type="OrthoDB" id="9801867at2"/>
<dbReference type="UniPathway" id="UPA00031">
    <property type="reaction ID" value="UER00006"/>
</dbReference>
<dbReference type="Proteomes" id="UP000001355">
    <property type="component" value="Chromosome"/>
</dbReference>
<dbReference type="GO" id="GO:0005737">
    <property type="term" value="C:cytoplasm"/>
    <property type="evidence" value="ECO:0007669"/>
    <property type="project" value="UniProtKB-SubCell"/>
</dbReference>
<dbReference type="GO" id="GO:0005524">
    <property type="term" value="F:ATP binding"/>
    <property type="evidence" value="ECO:0007669"/>
    <property type="project" value="UniProtKB-KW"/>
</dbReference>
<dbReference type="GO" id="GO:0003879">
    <property type="term" value="F:ATP phosphoribosyltransferase activity"/>
    <property type="evidence" value="ECO:0007669"/>
    <property type="project" value="UniProtKB-UniRule"/>
</dbReference>
<dbReference type="GO" id="GO:0000105">
    <property type="term" value="P:L-histidine biosynthetic process"/>
    <property type="evidence" value="ECO:0007669"/>
    <property type="project" value="UniProtKB-UniRule"/>
</dbReference>
<dbReference type="CDD" id="cd13595">
    <property type="entry name" value="PBP2_HisGs"/>
    <property type="match status" value="1"/>
</dbReference>
<dbReference type="FunFam" id="3.40.190.10:FF:000008">
    <property type="entry name" value="ATP phosphoribosyltransferase"/>
    <property type="match status" value="1"/>
</dbReference>
<dbReference type="FunFam" id="3.40.190.10:FF:000011">
    <property type="entry name" value="ATP phosphoribosyltransferase"/>
    <property type="match status" value="1"/>
</dbReference>
<dbReference type="Gene3D" id="3.40.190.10">
    <property type="entry name" value="Periplasmic binding protein-like II"/>
    <property type="match status" value="2"/>
</dbReference>
<dbReference type="HAMAP" id="MF_01018">
    <property type="entry name" value="HisG_Short"/>
    <property type="match status" value="1"/>
</dbReference>
<dbReference type="InterPro" id="IPR013820">
    <property type="entry name" value="ATP_PRibTrfase_cat"/>
</dbReference>
<dbReference type="InterPro" id="IPR018198">
    <property type="entry name" value="ATP_PRibTrfase_CS"/>
</dbReference>
<dbReference type="InterPro" id="IPR001348">
    <property type="entry name" value="ATP_PRibTrfase_HisG"/>
</dbReference>
<dbReference type="InterPro" id="IPR024893">
    <property type="entry name" value="ATP_PRibTrfase_HisG_short"/>
</dbReference>
<dbReference type="NCBIfam" id="TIGR00070">
    <property type="entry name" value="hisG"/>
    <property type="match status" value="1"/>
</dbReference>
<dbReference type="PANTHER" id="PTHR21403:SF8">
    <property type="entry name" value="ATP PHOSPHORIBOSYLTRANSFERASE"/>
    <property type="match status" value="1"/>
</dbReference>
<dbReference type="PANTHER" id="PTHR21403">
    <property type="entry name" value="ATP PHOSPHORIBOSYLTRANSFERASE ATP-PRTASE"/>
    <property type="match status" value="1"/>
</dbReference>
<dbReference type="Pfam" id="PF01634">
    <property type="entry name" value="HisG"/>
    <property type="match status" value="1"/>
</dbReference>
<dbReference type="SUPFAM" id="SSF53850">
    <property type="entry name" value="Periplasmic binding protein-like II"/>
    <property type="match status" value="1"/>
</dbReference>
<dbReference type="PROSITE" id="PS01316">
    <property type="entry name" value="ATP_P_PHORIBOSYLTR"/>
    <property type="match status" value="1"/>
</dbReference>
<organism>
    <name type="scientific">Bacillus pumilus (strain SAFR-032)</name>
    <dbReference type="NCBI Taxonomy" id="315750"/>
    <lineage>
        <taxon>Bacteria</taxon>
        <taxon>Bacillati</taxon>
        <taxon>Bacillota</taxon>
        <taxon>Bacilli</taxon>
        <taxon>Bacillales</taxon>
        <taxon>Bacillaceae</taxon>
        <taxon>Bacillus</taxon>
    </lineage>
</organism>
<name>HIS1_BACP2</name>
<comment type="function">
    <text evidence="1">Catalyzes the condensation of ATP and 5-phosphoribose 1-diphosphate to form N'-(5'-phosphoribosyl)-ATP (PR-ATP). Has a crucial role in the pathway because the rate of histidine biosynthesis seems to be controlled primarily by regulation of HisG enzymatic activity.</text>
</comment>
<comment type="catalytic activity">
    <reaction evidence="1">
        <text>1-(5-phospho-beta-D-ribosyl)-ATP + diphosphate = 5-phospho-alpha-D-ribose 1-diphosphate + ATP</text>
        <dbReference type="Rhea" id="RHEA:18473"/>
        <dbReference type="ChEBI" id="CHEBI:30616"/>
        <dbReference type="ChEBI" id="CHEBI:33019"/>
        <dbReference type="ChEBI" id="CHEBI:58017"/>
        <dbReference type="ChEBI" id="CHEBI:73183"/>
        <dbReference type="EC" id="2.4.2.17"/>
    </reaction>
</comment>
<comment type="pathway">
    <text evidence="1">Amino-acid biosynthesis; L-histidine biosynthesis; L-histidine from 5-phospho-alpha-D-ribose 1-diphosphate: step 1/9.</text>
</comment>
<comment type="subunit">
    <text evidence="1">Heteromultimer composed of HisG and HisZ subunits.</text>
</comment>
<comment type="subcellular location">
    <subcellularLocation>
        <location evidence="1">Cytoplasm</location>
    </subcellularLocation>
</comment>
<comment type="domain">
    <text>Lacks the C-terminal regulatory region which is replaced by HisZ.</text>
</comment>
<comment type="similarity">
    <text evidence="1">Belongs to the ATP phosphoribosyltransferase family. Short subfamily.</text>
</comment>
<keyword id="KW-0028">Amino-acid biosynthesis</keyword>
<keyword id="KW-0067">ATP-binding</keyword>
<keyword id="KW-0963">Cytoplasm</keyword>
<keyword id="KW-0328">Glycosyltransferase</keyword>
<keyword id="KW-0368">Histidine biosynthesis</keyword>
<keyword id="KW-0547">Nucleotide-binding</keyword>
<keyword id="KW-0808">Transferase</keyword>
<proteinExistence type="inferred from homology"/>